<proteinExistence type="evidence at protein level"/>
<protein>
    <recommendedName>
        <fullName>Glutamate dehydrogenase 1, mitochondrial</fullName>
        <shortName>GDH 1</shortName>
        <ecNumber evidence="7 9 11 13 14">1.4.1.3</ecNumber>
    </recommendedName>
</protein>
<name>DHE3_HUMAN</name>
<dbReference type="EC" id="1.4.1.3" evidence="7 9 11 13 14"/>
<dbReference type="EMBL" id="X07674">
    <property type="protein sequence ID" value="CAA30521.1"/>
    <property type="molecule type" value="mRNA"/>
</dbReference>
<dbReference type="EMBL" id="M20867">
    <property type="protein sequence ID" value="AAA52526.1"/>
    <property type="molecule type" value="mRNA"/>
</dbReference>
<dbReference type="EMBL" id="M37154">
    <property type="protein sequence ID" value="AAA52525.1"/>
    <property type="molecule type" value="mRNA"/>
</dbReference>
<dbReference type="EMBL" id="X07769">
    <property type="protein sequence ID" value="CAA30598.1"/>
    <property type="molecule type" value="mRNA"/>
</dbReference>
<dbReference type="EMBL" id="J03248">
    <property type="protein sequence ID" value="AAA52523.1"/>
    <property type="molecule type" value="mRNA"/>
</dbReference>
<dbReference type="EMBL" id="X66300">
    <property type="protein sequence ID" value="CAA46994.2"/>
    <property type="molecule type" value="Genomic_DNA"/>
</dbReference>
<dbReference type="EMBL" id="X66301">
    <property type="protein sequence ID" value="CAA46994.2"/>
    <property type="status" value="JOINED"/>
    <property type="molecule type" value="Genomic_DNA"/>
</dbReference>
<dbReference type="EMBL" id="X66302">
    <property type="protein sequence ID" value="CAA46994.2"/>
    <property type="status" value="JOINED"/>
    <property type="molecule type" value="Genomic_DNA"/>
</dbReference>
<dbReference type="EMBL" id="X66303">
    <property type="protein sequence ID" value="CAA46994.2"/>
    <property type="status" value="JOINED"/>
    <property type="molecule type" value="Genomic_DNA"/>
</dbReference>
<dbReference type="EMBL" id="X66304">
    <property type="protein sequence ID" value="CAA46994.2"/>
    <property type="status" value="JOINED"/>
    <property type="molecule type" value="Genomic_DNA"/>
</dbReference>
<dbReference type="EMBL" id="X66305">
    <property type="protein sequence ID" value="CAA46994.2"/>
    <property type="status" value="JOINED"/>
    <property type="molecule type" value="Genomic_DNA"/>
</dbReference>
<dbReference type="EMBL" id="X66306">
    <property type="protein sequence ID" value="CAA46994.2"/>
    <property type="status" value="JOINED"/>
    <property type="molecule type" value="Genomic_DNA"/>
</dbReference>
<dbReference type="EMBL" id="X66307">
    <property type="protein sequence ID" value="CAA46994.2"/>
    <property type="status" value="JOINED"/>
    <property type="molecule type" value="Genomic_DNA"/>
</dbReference>
<dbReference type="EMBL" id="X66308">
    <property type="protein sequence ID" value="CAA46994.2"/>
    <property type="status" value="JOINED"/>
    <property type="molecule type" value="Genomic_DNA"/>
</dbReference>
<dbReference type="EMBL" id="X66309">
    <property type="protein sequence ID" value="CAA46994.2"/>
    <property type="status" value="JOINED"/>
    <property type="molecule type" value="Genomic_DNA"/>
</dbReference>
<dbReference type="EMBL" id="X66311">
    <property type="protein sequence ID" value="CAA46994.2"/>
    <property type="status" value="JOINED"/>
    <property type="molecule type" value="Genomic_DNA"/>
</dbReference>
<dbReference type="EMBL" id="X66312">
    <property type="protein sequence ID" value="CAA46994.2"/>
    <property type="status" value="JOINED"/>
    <property type="molecule type" value="Genomic_DNA"/>
</dbReference>
<dbReference type="EMBL" id="AK122685">
    <property type="protein sequence ID" value="BAG53667.1"/>
    <property type="molecule type" value="mRNA"/>
</dbReference>
<dbReference type="EMBL" id="AK294685">
    <property type="protein sequence ID" value="BAG57846.1"/>
    <property type="molecule type" value="mRNA"/>
</dbReference>
<dbReference type="EMBL" id="AL136982">
    <property type="protein sequence ID" value="CAI17120.1"/>
    <property type="molecule type" value="Genomic_DNA"/>
</dbReference>
<dbReference type="EMBL" id="CH471142">
    <property type="protein sequence ID" value="EAW80300.1"/>
    <property type="molecule type" value="Genomic_DNA"/>
</dbReference>
<dbReference type="EMBL" id="CH471142">
    <property type="protein sequence ID" value="EAW80302.1"/>
    <property type="molecule type" value="Genomic_DNA"/>
</dbReference>
<dbReference type="EMBL" id="BC040132">
    <property type="protein sequence ID" value="AAH40132.1"/>
    <property type="molecule type" value="mRNA"/>
</dbReference>
<dbReference type="EMBL" id="BC112946">
    <property type="protein sequence ID" value="AAI12947.1"/>
    <property type="molecule type" value="mRNA"/>
</dbReference>
<dbReference type="EMBL" id="X67491">
    <property type="protein sequence ID" value="CAA47830.1"/>
    <property type="molecule type" value="Genomic_DNA"/>
</dbReference>
<dbReference type="CCDS" id="CCDS7382.1">
    <molecule id="P00367-1"/>
</dbReference>
<dbReference type="CCDS" id="CCDS91291.1">
    <molecule id="P00367-2"/>
</dbReference>
<dbReference type="PIR" id="A28208">
    <property type="entry name" value="DEHUE"/>
</dbReference>
<dbReference type="PIR" id="I37424">
    <property type="entry name" value="I37424"/>
</dbReference>
<dbReference type="PIR" id="S29331">
    <property type="entry name" value="S29331"/>
</dbReference>
<dbReference type="PIR" id="S60192">
    <property type="entry name" value="S60192"/>
</dbReference>
<dbReference type="RefSeq" id="NP_001305829.1">
    <molecule id="P00367-3"/>
    <property type="nucleotide sequence ID" value="NM_001318900.1"/>
</dbReference>
<dbReference type="RefSeq" id="NP_001305830.1">
    <molecule id="P00367-2"/>
    <property type="nucleotide sequence ID" value="NM_001318901.1"/>
</dbReference>
<dbReference type="RefSeq" id="NP_001305831.1">
    <molecule id="P00367-2"/>
    <property type="nucleotide sequence ID" value="NM_001318902.1"/>
</dbReference>
<dbReference type="RefSeq" id="NP_001305833.1">
    <molecule id="P00367-2"/>
    <property type="nucleotide sequence ID" value="NM_001318904.2"/>
</dbReference>
<dbReference type="RefSeq" id="NP_001305834.1">
    <molecule id="P00367-2"/>
    <property type="nucleotide sequence ID" value="NM_001318905.2"/>
</dbReference>
<dbReference type="RefSeq" id="NP_001305835.1">
    <molecule id="P00367-2"/>
    <property type="nucleotide sequence ID" value="NM_001318906.2"/>
</dbReference>
<dbReference type="RefSeq" id="NP_005262.1">
    <molecule id="P00367-1"/>
    <property type="nucleotide sequence ID" value="NM_005271.5"/>
</dbReference>
<dbReference type="RefSeq" id="XP_047281055.1">
    <molecule id="P00367-2"/>
    <property type="nucleotide sequence ID" value="XM_047425099.1"/>
</dbReference>
<dbReference type="RefSeq" id="XP_047281056.1">
    <molecule id="P00367-2"/>
    <property type="nucleotide sequence ID" value="XM_047425100.1"/>
</dbReference>
<dbReference type="RefSeq" id="XP_054221592.1">
    <molecule id="P00367-2"/>
    <property type="nucleotide sequence ID" value="XM_054365617.1"/>
</dbReference>
<dbReference type="RefSeq" id="XP_054221593.1">
    <molecule id="P00367-2"/>
    <property type="nucleotide sequence ID" value="XM_054365618.1"/>
</dbReference>
<dbReference type="PDB" id="1L1F">
    <property type="method" value="X-ray"/>
    <property type="resolution" value="2.70 A"/>
    <property type="chains" value="A/B/C/D/E/F=54-558"/>
</dbReference>
<dbReference type="PDB" id="1NR1">
    <property type="method" value="X-ray"/>
    <property type="resolution" value="3.30 A"/>
    <property type="chains" value="A/B/C/D/E/F=63-558"/>
</dbReference>
<dbReference type="PDB" id="6DQG">
    <property type="method" value="X-ray"/>
    <property type="resolution" value="2.70 A"/>
    <property type="chains" value="A/B/C/D/E/F=63-558"/>
</dbReference>
<dbReference type="PDB" id="7UZM">
    <property type="method" value="EM"/>
    <property type="resolution" value="3.24 A"/>
    <property type="chains" value="A/B/C/D/E/F=1-558"/>
</dbReference>
<dbReference type="PDB" id="8KGY">
    <property type="method" value="EM"/>
    <property type="resolution" value="2.59 A"/>
    <property type="chains" value="A/B/C/D/E/F=1-558"/>
</dbReference>
<dbReference type="PDB" id="8SK8">
    <property type="method" value="EM"/>
    <property type="resolution" value="2.31 A"/>
    <property type="chains" value="A/B/C/D/E/F=1-558"/>
</dbReference>
<dbReference type="PDB" id="8W4J">
    <property type="method" value="EM"/>
    <property type="resolution" value="3.06 A"/>
    <property type="chains" value="A/B/C/D/E/F=1-558"/>
</dbReference>
<dbReference type="PDBsum" id="1L1F"/>
<dbReference type="PDBsum" id="1NR1"/>
<dbReference type="PDBsum" id="6DQG"/>
<dbReference type="PDBsum" id="7UZM"/>
<dbReference type="PDBsum" id="8KGY"/>
<dbReference type="PDBsum" id="8SK8"/>
<dbReference type="PDBsum" id="8W4J"/>
<dbReference type="EMDB" id="EMD-26915"/>
<dbReference type="EMDB" id="EMD-37235"/>
<dbReference type="EMDB" id="EMD-37266"/>
<dbReference type="EMDB" id="EMD-40558"/>
<dbReference type="SMR" id="P00367"/>
<dbReference type="BioGRID" id="109008">
    <property type="interactions" value="256"/>
</dbReference>
<dbReference type="FunCoup" id="P00367">
    <property type="interactions" value="1865"/>
</dbReference>
<dbReference type="IntAct" id="P00367">
    <property type="interactions" value="121"/>
</dbReference>
<dbReference type="MINT" id="P00367"/>
<dbReference type="STRING" id="9606.ENSP00000277865"/>
<dbReference type="DrugBank" id="DB11081">
    <property type="generic name" value="Aluminum chloride"/>
</dbReference>
<dbReference type="DrugBank" id="DB00142">
    <property type="generic name" value="Glutamic acid"/>
</dbReference>
<dbReference type="DrugBank" id="DB04137">
    <property type="generic name" value="Guanosine-5'-Triphosphate"/>
</dbReference>
<dbReference type="DrugBank" id="DB00756">
    <property type="generic name" value="Hexachlorophene"/>
</dbReference>
<dbReference type="DrugBank" id="DB00157">
    <property type="generic name" value="NADH"/>
</dbReference>
<dbReference type="DrugCentral" id="P00367"/>
<dbReference type="GlyGen" id="P00367">
    <property type="glycosylation" value="2 sites, 1 O-linked glycan (1 site)"/>
</dbReference>
<dbReference type="iPTMnet" id="P00367"/>
<dbReference type="MetOSite" id="P00367"/>
<dbReference type="PhosphoSitePlus" id="P00367"/>
<dbReference type="SwissPalm" id="P00367"/>
<dbReference type="BioMuta" id="GLUD1"/>
<dbReference type="DMDM" id="118541"/>
<dbReference type="REPRODUCTION-2DPAGE" id="IPI00016801"/>
<dbReference type="CPTAC" id="CPTAC-2725"/>
<dbReference type="CPTAC" id="CPTAC-2726"/>
<dbReference type="jPOST" id="P00367"/>
<dbReference type="MassIVE" id="P00367"/>
<dbReference type="PaxDb" id="9606-ENSP00000277865"/>
<dbReference type="PeptideAtlas" id="P00367"/>
<dbReference type="ProteomicsDB" id="3743"/>
<dbReference type="ProteomicsDB" id="4147"/>
<dbReference type="ProteomicsDB" id="51236">
    <molecule id="P00367-1"/>
</dbReference>
<dbReference type="Pumba" id="P00367"/>
<dbReference type="Antibodypedia" id="16023">
    <property type="antibodies" value="268 antibodies from 37 providers"/>
</dbReference>
<dbReference type="DNASU" id="2746"/>
<dbReference type="Ensembl" id="ENST00000277865.5">
    <molecule id="P00367-1"/>
    <property type="protein sequence ID" value="ENSP00000277865.4"/>
    <property type="gene ID" value="ENSG00000148672.10"/>
</dbReference>
<dbReference type="Ensembl" id="ENST00000681988.1">
    <molecule id="P00367-2"/>
    <property type="protein sequence ID" value="ENSP00000507316.1"/>
    <property type="gene ID" value="ENSG00000148672.10"/>
</dbReference>
<dbReference type="Ensembl" id="ENST00000682507.1">
    <molecule id="P00367-2"/>
    <property type="protein sequence ID" value="ENSP00000508098.1"/>
    <property type="gene ID" value="ENSG00000148672.10"/>
</dbReference>
<dbReference type="Ensembl" id="ENST00000683256.1">
    <molecule id="P00367-2"/>
    <property type="protein sequence ID" value="ENSP00000507901.1"/>
    <property type="gene ID" value="ENSG00000148672.10"/>
</dbReference>
<dbReference type="Ensembl" id="ENST00000683269.1">
    <molecule id="P00367-2"/>
    <property type="protein sequence ID" value="ENSP00000508107.1"/>
    <property type="gene ID" value="ENSG00000148672.10"/>
</dbReference>
<dbReference type="Ensembl" id="ENST00000683783.1">
    <molecule id="P00367-2"/>
    <property type="protein sequence ID" value="ENSP00000507881.1"/>
    <property type="gene ID" value="ENSG00000148672.10"/>
</dbReference>
<dbReference type="Ensembl" id="ENST00000684372.1">
    <molecule id="P00367-2"/>
    <property type="protein sequence ID" value="ENSP00000508244.1"/>
    <property type="gene ID" value="ENSG00000148672.10"/>
</dbReference>
<dbReference type="Ensembl" id="ENST00000684546.1">
    <molecule id="P00367-2"/>
    <property type="protein sequence ID" value="ENSP00000507729.1"/>
    <property type="gene ID" value="ENSG00000148672.10"/>
</dbReference>
<dbReference type="GeneID" id="2746"/>
<dbReference type="KEGG" id="hsa:2746"/>
<dbReference type="MANE-Select" id="ENST00000277865.5">
    <property type="protein sequence ID" value="ENSP00000277865.4"/>
    <property type="RefSeq nucleotide sequence ID" value="NM_005271.5"/>
    <property type="RefSeq protein sequence ID" value="NP_005262.1"/>
</dbReference>
<dbReference type="UCSC" id="uc001keh.4">
    <molecule id="P00367-1"/>
    <property type="organism name" value="human"/>
</dbReference>
<dbReference type="AGR" id="HGNC:4335"/>
<dbReference type="CTD" id="2746"/>
<dbReference type="DisGeNET" id="2746"/>
<dbReference type="GeneCards" id="GLUD1"/>
<dbReference type="GeneReviews" id="GLUD1"/>
<dbReference type="HGNC" id="HGNC:4335">
    <property type="gene designation" value="GLUD1"/>
</dbReference>
<dbReference type="HPA" id="ENSG00000148672">
    <property type="expression patterns" value="Group enriched (brain, kidney, liver)"/>
</dbReference>
<dbReference type="MalaCards" id="GLUD1"/>
<dbReference type="MIM" id="138130">
    <property type="type" value="gene"/>
</dbReference>
<dbReference type="MIM" id="606762">
    <property type="type" value="phenotype"/>
</dbReference>
<dbReference type="neXtProt" id="NX_P00367"/>
<dbReference type="OpenTargets" id="ENSG00000148672"/>
<dbReference type="Orphanet" id="35878">
    <property type="disease" value="Hyperinsulinism-hyperammonemia syndrome"/>
</dbReference>
<dbReference type="PharmGKB" id="PA28737"/>
<dbReference type="VEuPathDB" id="HostDB:ENSG00000148672"/>
<dbReference type="eggNOG" id="KOG2250">
    <property type="taxonomic scope" value="Eukaryota"/>
</dbReference>
<dbReference type="GeneTree" id="ENSGT00390000000854"/>
<dbReference type="HOGENOM" id="CLU_025763_1_0_1"/>
<dbReference type="InParanoid" id="P00367"/>
<dbReference type="OMA" id="MIMGWMM"/>
<dbReference type="OrthoDB" id="6718861at2759"/>
<dbReference type="PAN-GO" id="P00367">
    <property type="GO annotations" value="3 GO annotations based on evolutionary models"/>
</dbReference>
<dbReference type="PhylomeDB" id="P00367"/>
<dbReference type="TreeFam" id="TF313945"/>
<dbReference type="BioCyc" id="MetaCyc:HS07548-MONOMER"/>
<dbReference type="BRENDA" id="1.4.1.3">
    <property type="organism ID" value="2681"/>
</dbReference>
<dbReference type="PathwayCommons" id="P00367"/>
<dbReference type="Reactome" id="R-HSA-2151201">
    <property type="pathway name" value="Transcriptional activation of mitochondrial biogenesis"/>
</dbReference>
<dbReference type="Reactome" id="R-HSA-8964539">
    <property type="pathway name" value="Glutamate and glutamine metabolism"/>
</dbReference>
<dbReference type="Reactome" id="R-HSA-9837999">
    <property type="pathway name" value="Mitochondrial protein degradation"/>
</dbReference>
<dbReference type="SABIO-RK" id="P00367"/>
<dbReference type="SignaLink" id="P00367"/>
<dbReference type="SIGNOR" id="P00367"/>
<dbReference type="BioGRID-ORCS" id="2746">
    <property type="hits" value="20 hits in 1163 CRISPR screens"/>
</dbReference>
<dbReference type="ChiTaRS" id="GLUD1">
    <property type="organism name" value="human"/>
</dbReference>
<dbReference type="EvolutionaryTrace" id="P00367"/>
<dbReference type="GeneWiki" id="Glutamate_dehydrogenase_1"/>
<dbReference type="GenomeRNAi" id="2746"/>
<dbReference type="Pharos" id="P00367">
    <property type="development level" value="Tbio"/>
</dbReference>
<dbReference type="PRO" id="PR:P00367"/>
<dbReference type="Proteomes" id="UP000005640">
    <property type="component" value="Chromosome 10"/>
</dbReference>
<dbReference type="RNAct" id="P00367">
    <property type="molecule type" value="protein"/>
</dbReference>
<dbReference type="Bgee" id="ENSG00000148672">
    <property type="expression patterns" value="Expressed in right lobe of liver and 202 other cell types or tissues"/>
</dbReference>
<dbReference type="ExpressionAtlas" id="P00367">
    <property type="expression patterns" value="baseline and differential"/>
</dbReference>
<dbReference type="GO" id="GO:0005737">
    <property type="term" value="C:cytoplasm"/>
    <property type="evidence" value="ECO:0000314"/>
    <property type="project" value="BHF-UCL"/>
</dbReference>
<dbReference type="GO" id="GO:0005783">
    <property type="term" value="C:endoplasmic reticulum"/>
    <property type="evidence" value="ECO:0000314"/>
    <property type="project" value="UniProtKB"/>
</dbReference>
<dbReference type="GO" id="GO:0005759">
    <property type="term" value="C:mitochondrial matrix"/>
    <property type="evidence" value="ECO:0000304"/>
    <property type="project" value="Reactome"/>
</dbReference>
<dbReference type="GO" id="GO:0005739">
    <property type="term" value="C:mitochondrion"/>
    <property type="evidence" value="ECO:0000314"/>
    <property type="project" value="HPA"/>
</dbReference>
<dbReference type="GO" id="GO:0043531">
    <property type="term" value="F:ADP binding"/>
    <property type="evidence" value="ECO:0000314"/>
    <property type="project" value="BHF-UCL"/>
</dbReference>
<dbReference type="GO" id="GO:0005524">
    <property type="term" value="F:ATP binding"/>
    <property type="evidence" value="ECO:0007669"/>
    <property type="project" value="UniProtKB-KW"/>
</dbReference>
<dbReference type="GO" id="GO:0004352">
    <property type="term" value="F:glutamate dehydrogenase (NAD+) activity"/>
    <property type="evidence" value="ECO:0000314"/>
    <property type="project" value="UniProtKB"/>
</dbReference>
<dbReference type="GO" id="GO:0004354">
    <property type="term" value="F:glutamate dehydrogenase (NADP+) activity"/>
    <property type="evidence" value="ECO:0007669"/>
    <property type="project" value="RHEA"/>
</dbReference>
<dbReference type="GO" id="GO:0004353">
    <property type="term" value="F:glutamate dehydrogenase [NAD(P)+] activity"/>
    <property type="evidence" value="ECO:0000314"/>
    <property type="project" value="BHF-UCL"/>
</dbReference>
<dbReference type="GO" id="GO:0005525">
    <property type="term" value="F:GTP binding"/>
    <property type="evidence" value="ECO:0000314"/>
    <property type="project" value="BHF-UCL"/>
</dbReference>
<dbReference type="GO" id="GO:0070728">
    <property type="term" value="F:L-leucine binding"/>
    <property type="evidence" value="ECO:0000314"/>
    <property type="project" value="BHF-UCL"/>
</dbReference>
<dbReference type="GO" id="GO:0070403">
    <property type="term" value="F:NAD+ binding"/>
    <property type="evidence" value="ECO:0000314"/>
    <property type="project" value="BHF-UCL"/>
</dbReference>
<dbReference type="GO" id="GO:0042803">
    <property type="term" value="F:protein homodimerization activity"/>
    <property type="evidence" value="ECO:0000353"/>
    <property type="project" value="BHF-UCL"/>
</dbReference>
<dbReference type="GO" id="GO:0006537">
    <property type="term" value="P:glutamate biosynthetic process"/>
    <property type="evidence" value="ECO:0000314"/>
    <property type="project" value="BHF-UCL"/>
</dbReference>
<dbReference type="GO" id="GO:0006538">
    <property type="term" value="P:glutamate catabolic process"/>
    <property type="evidence" value="ECO:0000314"/>
    <property type="project" value="UniProtKB"/>
</dbReference>
<dbReference type="GO" id="GO:0006541">
    <property type="term" value="P:glutamine metabolic process"/>
    <property type="evidence" value="ECO:0000250"/>
    <property type="project" value="UniProtKB"/>
</dbReference>
<dbReference type="GO" id="GO:0032024">
    <property type="term" value="P:positive regulation of insulin secretion"/>
    <property type="evidence" value="ECO:0000315"/>
    <property type="project" value="BHF-UCL"/>
</dbReference>
<dbReference type="GO" id="GO:0021762">
    <property type="term" value="P:substantia nigra development"/>
    <property type="evidence" value="ECO:0007007"/>
    <property type="project" value="UniProtKB"/>
</dbReference>
<dbReference type="GO" id="GO:0072350">
    <property type="term" value="P:tricarboxylic acid metabolic process"/>
    <property type="evidence" value="ECO:0000250"/>
    <property type="project" value="UniProtKB"/>
</dbReference>
<dbReference type="CDD" id="cd01076">
    <property type="entry name" value="NAD_bind_1_Glu_DH"/>
    <property type="match status" value="1"/>
</dbReference>
<dbReference type="FunFam" id="1.10.287.140:FF:000001">
    <property type="entry name" value="Glutamate dehydrogenase 1, mitochondrial"/>
    <property type="match status" value="1"/>
</dbReference>
<dbReference type="FunFam" id="3.40.50.10860:FF:000007">
    <property type="entry name" value="Glutamate dehydrogenase 1, mitochondrial"/>
    <property type="match status" value="1"/>
</dbReference>
<dbReference type="FunFam" id="3.40.50.720:FF:000100">
    <property type="entry name" value="Glutamate dehydrogenase 1, mitochondrial"/>
    <property type="match status" value="1"/>
</dbReference>
<dbReference type="Gene3D" id="1.10.287.140">
    <property type="match status" value="1"/>
</dbReference>
<dbReference type="Gene3D" id="3.40.50.10860">
    <property type="entry name" value="Leucine Dehydrogenase, chain A, domain 1"/>
    <property type="match status" value="1"/>
</dbReference>
<dbReference type="Gene3D" id="3.40.50.720">
    <property type="entry name" value="NAD(P)-binding Rossmann-like Domain"/>
    <property type="match status" value="1"/>
</dbReference>
<dbReference type="InterPro" id="IPR046346">
    <property type="entry name" value="Aminoacid_DH-like_N_sf"/>
</dbReference>
<dbReference type="InterPro" id="IPR006095">
    <property type="entry name" value="Glu/Leu/Phe/Val/Trp_DH"/>
</dbReference>
<dbReference type="InterPro" id="IPR006096">
    <property type="entry name" value="Glu/Leu/Phe/Val/Trp_DH_C"/>
</dbReference>
<dbReference type="InterPro" id="IPR006097">
    <property type="entry name" value="Glu/Leu/Phe/Val/Trp_DH_dimer"/>
</dbReference>
<dbReference type="InterPro" id="IPR033524">
    <property type="entry name" value="Glu/Leu/Phe/Val_DH_AS"/>
</dbReference>
<dbReference type="InterPro" id="IPR036291">
    <property type="entry name" value="NAD(P)-bd_dom_sf"/>
</dbReference>
<dbReference type="InterPro" id="IPR033922">
    <property type="entry name" value="NAD_bind_Glu_DH"/>
</dbReference>
<dbReference type="PANTHER" id="PTHR11606">
    <property type="entry name" value="GLUTAMATE DEHYDROGENASE"/>
    <property type="match status" value="1"/>
</dbReference>
<dbReference type="PANTHER" id="PTHR11606:SF13">
    <property type="entry name" value="GLUTAMATE DEHYDROGENASE 1, MITOCHONDRIAL"/>
    <property type="match status" value="1"/>
</dbReference>
<dbReference type="Pfam" id="PF00208">
    <property type="entry name" value="ELFV_dehydrog"/>
    <property type="match status" value="1"/>
</dbReference>
<dbReference type="Pfam" id="PF02812">
    <property type="entry name" value="ELFV_dehydrog_N"/>
    <property type="match status" value="1"/>
</dbReference>
<dbReference type="PRINTS" id="PR00082">
    <property type="entry name" value="GLFDHDRGNASE"/>
</dbReference>
<dbReference type="SMART" id="SM00839">
    <property type="entry name" value="ELFV_dehydrog"/>
    <property type="match status" value="1"/>
</dbReference>
<dbReference type="SUPFAM" id="SSF53223">
    <property type="entry name" value="Aminoacid dehydrogenase-like, N-terminal domain"/>
    <property type="match status" value="1"/>
</dbReference>
<dbReference type="SUPFAM" id="SSF51735">
    <property type="entry name" value="NAD(P)-binding Rossmann-fold domains"/>
    <property type="match status" value="1"/>
</dbReference>
<dbReference type="PROSITE" id="PS00074">
    <property type="entry name" value="GLFV_DEHYDROGENASE"/>
    <property type="match status" value="1"/>
</dbReference>
<keyword id="KW-0002">3D-structure</keyword>
<keyword id="KW-0007">Acetylation</keyword>
<keyword id="KW-0013">ADP-ribosylation</keyword>
<keyword id="KW-0025">Alternative splicing</keyword>
<keyword id="KW-0067">ATP-binding</keyword>
<keyword id="KW-0903">Direct protein sequencing</keyword>
<keyword id="KW-0225">Disease variant</keyword>
<keyword id="KW-0256">Endoplasmic reticulum</keyword>
<keyword id="KW-0342">GTP-binding</keyword>
<keyword id="KW-0379">Hydroxylation</keyword>
<keyword id="KW-0496">Mitochondrion</keyword>
<keyword id="KW-0521">NADP</keyword>
<keyword id="KW-0547">Nucleotide-binding</keyword>
<keyword id="KW-0560">Oxidoreductase</keyword>
<keyword id="KW-0597">Phosphoprotein</keyword>
<keyword id="KW-1267">Proteomics identification</keyword>
<keyword id="KW-1185">Reference proteome</keyword>
<keyword id="KW-0809">Transit peptide</keyword>
<feature type="transit peptide" description="Mitochondrion" evidence="12 17 23">
    <location>
        <begin position="1"/>
        <end position="53"/>
    </location>
</feature>
<feature type="chain" id="PRO_0000007206" description="Glutamate dehydrogenase 1, mitochondrial">
    <location>
        <begin position="54"/>
        <end position="558"/>
    </location>
</feature>
<feature type="active site" evidence="5">
    <location>
        <position position="183"/>
    </location>
</feature>
<feature type="binding site" evidence="2">
    <location>
        <begin position="141"/>
        <end position="143"/>
    </location>
    <ligand>
        <name>NAD(+)</name>
        <dbReference type="ChEBI" id="CHEBI:57540"/>
    </ligand>
</feature>
<feature type="binding site" evidence="2">
    <location>
        <position position="147"/>
    </location>
    <ligand>
        <name>substrate</name>
    </ligand>
</feature>
<feature type="binding site" evidence="2">
    <location>
        <position position="171"/>
    </location>
    <ligand>
        <name>substrate</name>
    </ligand>
</feature>
<feature type="binding site" evidence="2">
    <location>
        <position position="176"/>
    </location>
    <ligand>
        <name>NAD(+)</name>
        <dbReference type="ChEBI" id="CHEBI:57540"/>
    </ligand>
</feature>
<feature type="binding site" evidence="2">
    <location>
        <position position="252"/>
    </location>
    <ligand>
        <name>NAD(+)</name>
        <dbReference type="ChEBI" id="CHEBI:57540"/>
    </ligand>
</feature>
<feature type="binding site" evidence="2">
    <location>
        <position position="266"/>
    </location>
    <ligand>
        <name>GTP</name>
        <dbReference type="ChEBI" id="CHEBI:37565"/>
    </ligand>
</feature>
<feature type="binding site" evidence="2">
    <location>
        <position position="270"/>
    </location>
    <ligand>
        <name>GTP</name>
        <dbReference type="ChEBI" id="CHEBI:37565"/>
    </ligand>
</feature>
<feature type="binding site" evidence="2">
    <location>
        <position position="319"/>
    </location>
    <ligand>
        <name>GTP</name>
        <dbReference type="ChEBI" id="CHEBI:37565"/>
    </ligand>
</feature>
<feature type="binding site" evidence="2">
    <location>
        <position position="322"/>
    </location>
    <ligand>
        <name>GTP</name>
        <dbReference type="ChEBI" id="CHEBI:37565"/>
    </ligand>
</feature>
<feature type="binding site" evidence="2">
    <location>
        <position position="438"/>
    </location>
    <ligand>
        <name>substrate</name>
    </ligand>
</feature>
<feature type="binding site" evidence="2">
    <location>
        <position position="444"/>
    </location>
    <ligand>
        <name>NAD(+)</name>
        <dbReference type="ChEBI" id="CHEBI:57540"/>
    </ligand>
</feature>
<feature type="binding site" evidence="2">
    <location>
        <position position="450"/>
    </location>
    <ligand>
        <name>ADP</name>
        <dbReference type="ChEBI" id="CHEBI:456216"/>
    </ligand>
</feature>
<feature type="binding site" evidence="2">
    <location>
        <position position="516"/>
    </location>
    <ligand>
        <name>ADP</name>
        <dbReference type="ChEBI" id="CHEBI:456216"/>
    </ligand>
</feature>
<feature type="modified residue" description="N6-succinyllysine" evidence="4">
    <location>
        <position position="68"/>
    </location>
</feature>
<feature type="modified residue" description="Phosphoserine" evidence="4">
    <location>
        <position position="79"/>
    </location>
</feature>
<feature type="modified residue" description="N6-acetyllysine; alternate" evidence="21">
    <location>
        <position position="84"/>
    </location>
</feature>
<feature type="modified residue" description="N6-succinyllysine; alternate" evidence="2">
    <location>
        <position position="84"/>
    </location>
</feature>
<feature type="modified residue" description="N6-acetyllysine; alternate" evidence="2">
    <location>
        <position position="110"/>
    </location>
</feature>
<feature type="modified residue" description="N6-succinyllysine; alternate" evidence="2">
    <location>
        <position position="110"/>
    </location>
</feature>
<feature type="modified residue" description="Phosphoserine" evidence="4">
    <location>
        <position position="128"/>
    </location>
</feature>
<feature type="modified residue" description="Phosphotyrosine" evidence="4">
    <location>
        <position position="135"/>
    </location>
</feature>
<feature type="modified residue" description="N6-(2-hydroxyisobutyryl)lysine" evidence="16">
    <location>
        <position position="147"/>
    </location>
</feature>
<feature type="modified residue" description="N6-acetyllysine; alternate" evidence="2">
    <location>
        <position position="162"/>
    </location>
</feature>
<feature type="modified residue" description="N6-succinyllysine; alternate" evidence="2">
    <location>
        <position position="162"/>
    </location>
</feature>
<feature type="modified residue" description="N6-acetyllysine" evidence="4">
    <location>
        <position position="171"/>
    </location>
</feature>
<feature type="modified residue" description="ADP-ribosylcysteine" evidence="13">
    <location>
        <position position="172"/>
    </location>
</feature>
<feature type="modified residue" description="N6-acetyllysine; alternate" evidence="2">
    <location>
        <position position="183"/>
    </location>
</feature>
<feature type="modified residue" description="N6-succinyllysine; alternate" evidence="4">
    <location>
        <position position="183"/>
    </location>
</feature>
<feature type="modified residue" description="N6-acetyllysine" evidence="4">
    <location>
        <position position="187"/>
    </location>
</feature>
<feature type="modified residue" description="N6-acetyllysine; alternate" evidence="2">
    <location>
        <position position="191"/>
    </location>
</feature>
<feature type="modified residue" description="N6-succinyllysine; alternate" evidence="4">
    <location>
        <position position="191"/>
    </location>
</feature>
<feature type="modified residue" description="N6-succinyllysine" evidence="4">
    <location>
        <position position="200"/>
    </location>
</feature>
<feature type="modified residue" description="N6-acetyllysine" evidence="4">
    <location>
        <position position="211"/>
    </location>
</feature>
<feature type="modified residue" description="Phosphoserine" evidence="22">
    <location>
        <position position="227"/>
    </location>
</feature>
<feature type="modified residue" description="N6-acetyllysine" evidence="4">
    <location>
        <position position="326"/>
    </location>
</feature>
<feature type="modified residue" description="N6-acetyllysine; alternate" evidence="4">
    <location>
        <position position="346"/>
    </location>
</feature>
<feature type="modified residue" description="N6-succinyllysine; alternate" evidence="4">
    <location>
        <position position="346"/>
    </location>
</feature>
<feature type="modified residue" description="N6-acetyllysine; alternate" evidence="4">
    <location>
        <position position="352"/>
    </location>
</feature>
<feature type="modified residue" description="N6-succinyllysine; alternate" evidence="4">
    <location>
        <position position="352"/>
    </location>
</feature>
<feature type="modified residue" description="N6-acetyllysine; alternate" evidence="2">
    <location>
        <position position="363"/>
    </location>
</feature>
<feature type="modified residue" description="N6-succinyllysine; alternate" evidence="2">
    <location>
        <position position="363"/>
    </location>
</feature>
<feature type="modified residue" description="N6-acetyllysine; alternate" evidence="2">
    <location>
        <position position="365"/>
    </location>
</feature>
<feature type="modified residue" description="N6-succinyllysine; alternate" evidence="4">
    <location>
        <position position="365"/>
    </location>
</feature>
<feature type="modified residue" description="Phosphoserine" evidence="22">
    <location>
        <position position="384"/>
    </location>
</feature>
<feature type="modified residue" description="N6-acetyllysine" evidence="2">
    <location>
        <position position="386"/>
    </location>
</feature>
<feature type="modified residue" description="N6-acetyllysine; alternate" evidence="4">
    <location>
        <position position="390"/>
    </location>
</feature>
<feature type="modified residue" description="N6-succinyllysine; alternate" evidence="4">
    <location>
        <position position="390"/>
    </location>
</feature>
<feature type="modified residue" description="N6-acetyllysine" evidence="2">
    <location>
        <position position="399"/>
    </location>
</feature>
<feature type="modified residue" description="Phosphothreonine" evidence="3">
    <location>
        <position position="410"/>
    </location>
</feature>
<feature type="modified residue" description="N6-acetyllysine; alternate" evidence="2">
    <location>
        <position position="415"/>
    </location>
</feature>
<feature type="modified residue" description="N6-succinyllysine; alternate" evidence="2">
    <location>
        <position position="415"/>
    </location>
</feature>
<feature type="modified residue" description="N6-acetyllysine; alternate" evidence="2">
    <location>
        <position position="457"/>
    </location>
</feature>
<feature type="modified residue" description="N6-malonyllysine; alternate" evidence="1">
    <location>
        <position position="457"/>
    </location>
</feature>
<feature type="modified residue" description="N6-succinyllysine; alternate" evidence="2">
    <location>
        <position position="457"/>
    </location>
</feature>
<feature type="modified residue" description="N6-acetyllysine; alternate" evidence="4">
    <location>
        <position position="477"/>
    </location>
</feature>
<feature type="modified residue" description="N6-succinyllysine; alternate" evidence="4">
    <location>
        <position position="477"/>
    </location>
</feature>
<feature type="modified residue" description="N6-acetyllysine; alternate" evidence="21">
    <location>
        <position position="480"/>
    </location>
</feature>
<feature type="modified residue" description="N6-succinyllysine; alternate" evidence="4">
    <location>
        <position position="480"/>
    </location>
</feature>
<feature type="modified residue" description="N6-acetyllysine; alternate" evidence="21">
    <location>
        <position position="503"/>
    </location>
</feature>
<feature type="modified residue" description="N6-malonyllysine; alternate" evidence="1">
    <location>
        <position position="503"/>
    </location>
</feature>
<feature type="modified residue" description="N6-succinyllysine; alternate" evidence="2">
    <location>
        <position position="503"/>
    </location>
</feature>
<feature type="modified residue" description="Phosphotyrosine" evidence="22">
    <location>
        <position position="512"/>
    </location>
</feature>
<feature type="modified residue" description="N6-acetyllysine; alternate" evidence="2">
    <location>
        <position position="527"/>
    </location>
</feature>
<feature type="modified residue" description="N6-malonyllysine; alternate" evidence="1">
    <location>
        <position position="527"/>
    </location>
</feature>
<feature type="modified residue" description="N6-succinyllysine; alternate" evidence="2">
    <location>
        <position position="527"/>
    </location>
</feature>
<feature type="modified residue" description="N6-acetyllysine; alternate" evidence="2">
    <location>
        <position position="545"/>
    </location>
</feature>
<feature type="modified residue" description="N6-succinyllysine; alternate" evidence="2">
    <location>
        <position position="545"/>
    </location>
</feature>
<feature type="modified residue" description="N6-acetyllysine" evidence="4">
    <location>
        <position position="548"/>
    </location>
</feature>
<feature type="splice variant" id="VSP_056244" description="In isoform 2." evidence="19">
    <location>
        <begin position="1"/>
        <end position="167"/>
    </location>
</feature>
<feature type="splice variant" id="VSP_056523" description="In isoform 3." evidence="19">
    <original>MYRYLGEALLLSRAGP</original>
    <variation>MTCPCDNASSVFLGFC</variation>
    <location>
        <begin position="1"/>
        <end position="16"/>
    </location>
</feature>
<feature type="splice variant" id="VSP_056524" description="In isoform 3." evidence="19">
    <location>
        <begin position="17"/>
        <end position="149"/>
    </location>
</feature>
<feature type="sequence variant" id="VAR_016760" description="In HHF6; diminished sensitivity to GTP." evidence="10">
    <original>S</original>
    <variation>C</variation>
    <location>
        <position position="270"/>
    </location>
</feature>
<feature type="sequence variant" id="VAR_016761" description="In HHF6; diminished sensitivity to GTP; dbSNP:rs56275071." evidence="8 10">
    <original>R</original>
    <variation>C</variation>
    <location>
        <position position="274"/>
    </location>
</feature>
<feature type="sequence variant" id="VAR_009270" description="In HHF6; dbSNP:rs121909736." evidence="6">
    <original>R</original>
    <variation>K</variation>
    <location>
        <position position="318"/>
    </location>
</feature>
<feature type="sequence variant" id="VAR_016762" description="In HHF6; diminished sensitivity to GTP; dbSNP:rs121909736." evidence="10">
    <original>R</original>
    <variation>T</variation>
    <location>
        <position position="318"/>
    </location>
</feature>
<feature type="sequence variant" id="VAR_016763" description="In HHF6; dbSNP:rs1554906133." evidence="10">
    <original>Y</original>
    <variation>C</variation>
    <location>
        <position position="319"/>
    </location>
</feature>
<feature type="sequence variant" id="VAR_016764" description="In HHF6; diminished sensitivity to GTP." evidence="10">
    <original>R</original>
    <variation>C</variation>
    <location>
        <position position="322"/>
    </location>
</feature>
<feature type="sequence variant" id="VAR_016765" description="In HHF6; diminished sensitivity to GTP; dbSNP:rs121909737." evidence="8 10">
    <original>R</original>
    <variation>H</variation>
    <location>
        <position position="322"/>
    </location>
</feature>
<feature type="sequence variant" id="VAR_009271" description="In HHF6; dbSNP:rs121909735." evidence="6">
    <original>E</original>
    <variation>A</variation>
    <location>
        <position position="349"/>
    </location>
</feature>
<feature type="sequence variant" id="VAR_008666" description="In HHF6; dbSNP:rs121909731." evidence="18">
    <original>S</original>
    <variation>L</variation>
    <location>
        <position position="498"/>
    </location>
</feature>
<feature type="sequence variant" id="VAR_008667" description="In HHF6; dbSNP:rs121909734." evidence="18">
    <original>G</original>
    <variation>D</variation>
    <location>
        <position position="499"/>
    </location>
</feature>
<feature type="sequence variant" id="VAR_008668" description="In HHF6; dbSNP:rs121909733." evidence="18">
    <original>G</original>
    <variation>S</variation>
    <location>
        <position position="499"/>
    </location>
</feature>
<feature type="sequence variant" id="VAR_008669" description="In HHF6; dbSNP:rs121909732." evidence="18">
    <original>S</original>
    <variation>P</variation>
    <location>
        <position position="501"/>
    </location>
</feature>
<feature type="sequence variant" id="VAR_008670" description="In HHF6; abolishes inhibition by ATP; no effect on activation by ADP; Strongly reduces inhibition by GTP; dbSNP:rs121909730." evidence="9 11 18">
    <original>H</original>
    <variation>Y</variation>
    <location>
        <position position="507"/>
    </location>
</feature>
<feature type="mutagenesis site" description="Reduces activity and inhibition by GTP." evidence="11">
    <original>S</original>
    <variation>A</variation>
    <location>
        <position position="501"/>
    </location>
</feature>
<feature type="mutagenesis site" description="Abolishes activation by ADP." evidence="11">
    <original>R</original>
    <variation>A</variation>
    <location>
        <position position="516"/>
    </location>
</feature>
<feature type="turn" evidence="26">
    <location>
        <begin position="65"/>
        <end position="67"/>
    </location>
</feature>
<feature type="helix" evidence="26">
    <location>
        <begin position="68"/>
        <end position="87"/>
    </location>
</feature>
<feature type="helix" evidence="24">
    <location>
        <begin position="91"/>
        <end position="93"/>
    </location>
</feature>
<feature type="helix" evidence="26">
    <location>
        <begin position="95"/>
        <end position="109"/>
    </location>
</feature>
<feature type="strand" evidence="26">
    <location>
        <begin position="113"/>
        <end position="123"/>
    </location>
</feature>
<feature type="strand" evidence="24">
    <location>
        <begin position="125"/>
        <end position="127"/>
    </location>
</feature>
<feature type="strand" evidence="26">
    <location>
        <begin position="129"/>
        <end position="139"/>
    </location>
</feature>
<feature type="strand" evidence="26">
    <location>
        <begin position="144"/>
        <end position="152"/>
    </location>
</feature>
<feature type="helix" evidence="26">
    <location>
        <begin position="158"/>
        <end position="174"/>
    </location>
</feature>
<feature type="strand" evidence="26">
    <location>
        <begin position="180"/>
        <end position="186"/>
    </location>
</feature>
<feature type="helix" evidence="26">
    <location>
        <begin position="190"/>
        <end position="192"/>
    </location>
</feature>
<feature type="helix" evidence="26">
    <location>
        <begin position="195"/>
        <end position="211"/>
    </location>
</feature>
<feature type="turn" evidence="26">
    <location>
        <begin position="217"/>
        <end position="219"/>
    </location>
</feature>
<feature type="strand" evidence="26">
    <location>
        <begin position="220"/>
        <end position="223"/>
    </location>
</feature>
<feature type="helix" evidence="26">
    <location>
        <begin position="230"/>
        <end position="243"/>
    </location>
</feature>
<feature type="turn" evidence="26">
    <location>
        <begin position="244"/>
        <end position="247"/>
    </location>
</feature>
<feature type="helix" evidence="26">
    <location>
        <begin position="249"/>
        <end position="254"/>
    </location>
</feature>
<feature type="helix" evidence="26">
    <location>
        <begin position="260"/>
        <end position="262"/>
    </location>
</feature>
<feature type="helix" evidence="26">
    <location>
        <begin position="271"/>
        <end position="284"/>
    </location>
</feature>
<feature type="helix" evidence="26">
    <location>
        <begin position="287"/>
        <end position="293"/>
    </location>
</feature>
<feature type="strand" evidence="26">
    <location>
        <begin position="297"/>
        <end position="299"/>
    </location>
</feature>
<feature type="strand" evidence="26">
    <location>
        <begin position="303"/>
        <end position="307"/>
    </location>
</feature>
<feature type="helix" evidence="26">
    <location>
        <begin position="311"/>
        <end position="322"/>
    </location>
</feature>
<feature type="strand" evidence="26">
    <location>
        <begin position="326"/>
        <end position="331"/>
    </location>
</feature>
<feature type="strand" evidence="26">
    <location>
        <begin position="336"/>
        <end position="338"/>
    </location>
</feature>
<feature type="helix" evidence="26">
    <location>
        <begin position="345"/>
        <end position="355"/>
    </location>
</feature>
<feature type="strand" evidence="26">
    <location>
        <begin position="356"/>
        <end position="358"/>
    </location>
</feature>
<feature type="strand" evidence="26">
    <location>
        <begin position="364"/>
        <end position="366"/>
    </location>
</feature>
<feature type="helix" evidence="26">
    <location>
        <begin position="371"/>
        <end position="373"/>
    </location>
</feature>
<feature type="strand" evidence="26">
    <location>
        <begin position="377"/>
        <end position="381"/>
    </location>
</feature>
<feature type="strand" evidence="26">
    <location>
        <begin position="383"/>
        <end position="385"/>
    </location>
</feature>
<feature type="turn" evidence="26">
    <location>
        <begin position="390"/>
        <end position="392"/>
    </location>
</feature>
<feature type="helix" evidence="26">
    <location>
        <begin position="393"/>
        <end position="395"/>
    </location>
</feature>
<feature type="strand" evidence="26">
    <location>
        <begin position="399"/>
        <end position="402"/>
    </location>
</feature>
<feature type="strand" evidence="26">
    <location>
        <begin position="405"/>
        <end position="407"/>
    </location>
</feature>
<feature type="helix" evidence="26">
    <location>
        <begin position="411"/>
        <end position="419"/>
    </location>
</feature>
<feature type="strand" evidence="26">
    <location>
        <begin position="423"/>
        <end position="425"/>
    </location>
</feature>
<feature type="helix" evidence="26">
    <location>
        <begin position="427"/>
        <end position="430"/>
    </location>
</feature>
<feature type="helix" evidence="26">
    <location>
        <begin position="433"/>
        <end position="447"/>
    </location>
</feature>
<feature type="turn" evidence="26">
    <location>
        <begin position="451"/>
        <end position="455"/>
    </location>
</feature>
<feature type="helix" evidence="26">
    <location>
        <begin position="456"/>
        <end position="478"/>
    </location>
</feature>
<feature type="turn" evidence="26">
    <location>
        <begin position="479"/>
        <end position="482"/>
    </location>
</feature>
<feature type="helix" evidence="26">
    <location>
        <begin position="491"/>
        <end position="498"/>
    </location>
</feature>
<feature type="helix" evidence="26">
    <location>
        <begin position="502"/>
        <end position="527"/>
    </location>
</feature>
<feature type="helix" evidence="26">
    <location>
        <begin position="534"/>
        <end position="551"/>
    </location>
</feature>
<feature type="turn" evidence="25">
    <location>
        <begin position="552"/>
        <end position="554"/>
    </location>
</feature>
<evidence type="ECO:0000250" key="1"/>
<evidence type="ECO:0000250" key="2">
    <source>
        <dbReference type="UniProtKB" id="P00366"/>
    </source>
</evidence>
<evidence type="ECO:0000250" key="3">
    <source>
        <dbReference type="UniProtKB" id="P10860"/>
    </source>
</evidence>
<evidence type="ECO:0000250" key="4">
    <source>
        <dbReference type="UniProtKB" id="P26443"/>
    </source>
</evidence>
<evidence type="ECO:0000255" key="5">
    <source>
        <dbReference type="PROSITE-ProRule" id="PRU10011"/>
    </source>
</evidence>
<evidence type="ECO:0000269" key="6">
    <source>
    </source>
</evidence>
<evidence type="ECO:0000269" key="7">
    <source>
    </source>
</evidence>
<evidence type="ECO:0000269" key="8">
    <source>
    </source>
</evidence>
<evidence type="ECO:0000269" key="9">
    <source>
    </source>
</evidence>
<evidence type="ECO:0000269" key="10">
    <source>
    </source>
</evidence>
<evidence type="ECO:0000269" key="11">
    <source>
    </source>
</evidence>
<evidence type="ECO:0000269" key="12">
    <source>
    </source>
</evidence>
<evidence type="ECO:0000269" key="13">
    <source>
    </source>
</evidence>
<evidence type="ECO:0000269" key="14">
    <source>
    </source>
</evidence>
<evidence type="ECO:0000269" key="15">
    <source>
    </source>
</evidence>
<evidence type="ECO:0000269" key="16">
    <source>
    </source>
</evidence>
<evidence type="ECO:0000269" key="17">
    <source>
    </source>
</evidence>
<evidence type="ECO:0000269" key="18">
    <source>
    </source>
</evidence>
<evidence type="ECO:0000303" key="19">
    <source>
    </source>
</evidence>
<evidence type="ECO:0000305" key="20"/>
<evidence type="ECO:0007744" key="21">
    <source>
    </source>
</evidence>
<evidence type="ECO:0007744" key="22">
    <source>
    </source>
</evidence>
<evidence type="ECO:0007744" key="23">
    <source>
    </source>
</evidence>
<evidence type="ECO:0007829" key="24">
    <source>
        <dbReference type="PDB" id="1L1F"/>
    </source>
</evidence>
<evidence type="ECO:0007829" key="25">
    <source>
        <dbReference type="PDB" id="8KGY"/>
    </source>
</evidence>
<evidence type="ECO:0007829" key="26">
    <source>
        <dbReference type="PDB" id="8SK8"/>
    </source>
</evidence>
<accession>P00367</accession>
<accession>B3KV55</accession>
<accession>B4DGN5</accession>
<accession>Q5TBU3</accession>
<organism>
    <name type="scientific">Homo sapiens</name>
    <name type="common">Human</name>
    <dbReference type="NCBI Taxonomy" id="9606"/>
    <lineage>
        <taxon>Eukaryota</taxon>
        <taxon>Metazoa</taxon>
        <taxon>Chordata</taxon>
        <taxon>Craniata</taxon>
        <taxon>Vertebrata</taxon>
        <taxon>Euteleostomi</taxon>
        <taxon>Mammalia</taxon>
        <taxon>Eutheria</taxon>
        <taxon>Euarchontoglires</taxon>
        <taxon>Primates</taxon>
        <taxon>Haplorrhini</taxon>
        <taxon>Catarrhini</taxon>
        <taxon>Hominidae</taxon>
        <taxon>Homo</taxon>
    </lineage>
</organism>
<sequence length="558" mass="61398">MYRYLGEALLLSRAGPAALGSASADSAALLGWARGQPAAAPQPGLALAARRHYSEAVADREDDPNFFKMVEGFFDRGASIVEDKLVEDLRTRESEEQKRNRVRGILRIIKPCNHVLSLSFPIRRDDGSWEVIEGYRAQHSQHRTPCKGGIRYSTDVSVDEVKALASLMTYKCAVVDVPFGGAKAGVKINPKNYTDNELEKITRRFTMELAKKGFIGPGIDVPAPDMSTGEREMSWIADTYASTIGHYDINAHACVTGKPISQGGIHGRISATGRGVFHGIENFINEASYMSILGMTPGFGDKTFVVQGFGNVGLHSMRYLHRFGAKCIAVGESDGSIWNPDGIDPKELEDFKLQHGSILGFPKAKPYEGSILEADCDILIPAASEKQLTKSNAPRVKAKIIAEGANGPTTPEADKIFLERNIMVIPDLYLNAGGVTVSYFEWLKNLNHVSYGRLTFKYERDSNYHLLMSVQESLERKFGKHGGTIPIVPTAEFQDRISGASEKDIVHSGLAYTMERSARQIMRTAMKYNLGLDLRTAAYVNAIEKVFKVYNEAGVTFT</sequence>
<comment type="function">
    <text evidence="3 7 9 10 13 14 18">Mitochondrial glutamate dehydrogenase that catalyzes the conversion of L-glutamate into alpha-ketoglutarate. Plays a key role in glutamine anaplerosis by producing alpha-ketoglutarate, an important intermediate in the tricarboxylic acid cycle (PubMed:11032875, PubMed:11254391, PubMed:16023112, PubMed:16959573). Plays a role in insulin homeostasis (PubMed:11297618, PubMed:9571255). May be involved in learning and memory reactions by increasing the turnover of the excitatory neurotransmitter glutamate (By similarity).</text>
</comment>
<comment type="catalytic activity">
    <reaction evidence="9 11 13 14">
        <text>L-glutamate + NAD(+) + H2O = 2-oxoglutarate + NH4(+) + NADH + H(+)</text>
        <dbReference type="Rhea" id="RHEA:15133"/>
        <dbReference type="ChEBI" id="CHEBI:15377"/>
        <dbReference type="ChEBI" id="CHEBI:15378"/>
        <dbReference type="ChEBI" id="CHEBI:16810"/>
        <dbReference type="ChEBI" id="CHEBI:28938"/>
        <dbReference type="ChEBI" id="CHEBI:29985"/>
        <dbReference type="ChEBI" id="CHEBI:57540"/>
        <dbReference type="ChEBI" id="CHEBI:57945"/>
        <dbReference type="EC" id="1.4.1.3"/>
    </reaction>
</comment>
<comment type="catalytic activity">
    <reaction evidence="7">
        <text>L-glutamate + NADP(+) + H2O = 2-oxoglutarate + NH4(+) + NADPH + H(+)</text>
        <dbReference type="Rhea" id="RHEA:11612"/>
        <dbReference type="ChEBI" id="CHEBI:15377"/>
        <dbReference type="ChEBI" id="CHEBI:15378"/>
        <dbReference type="ChEBI" id="CHEBI:16810"/>
        <dbReference type="ChEBI" id="CHEBI:28938"/>
        <dbReference type="ChEBI" id="CHEBI:29985"/>
        <dbReference type="ChEBI" id="CHEBI:57783"/>
        <dbReference type="ChEBI" id="CHEBI:58349"/>
        <dbReference type="EC" id="1.4.1.3"/>
    </reaction>
</comment>
<comment type="activity regulation">
    <text evidence="4 7 9 10 11 13 14 18">Subject to allosteric regulation. Activated by ADP (PubMed:11903050). Inhibited by GTP and ATP (PubMed:11032875, PubMed:11254391, PubMed:11297618, PubMed:11903050, PubMed:9571255). ADP can occupy the NADH binding site and activate the enzyme (PubMed:16023112). Inhibited by SIRT4 (PubMed:16959573). Inhibited by HADH (By similarity).</text>
</comment>
<comment type="subunit">
    <text evidence="2 4">Homohexamer (By similarity). Interacts with HADH; this interaction inhibits the activation of GLUD1 (By similarity).</text>
</comment>
<comment type="interaction">
    <interactant intactId="EBI-356544">
        <id>P00367</id>
    </interactant>
    <interactant intactId="EBI-720168">
        <id>P49448</id>
        <label>GLUD2</label>
    </interactant>
    <organismsDiffer>false</organismsDiffer>
    <experiments>2</experiments>
</comment>
<comment type="interaction">
    <interactant intactId="EBI-356544">
        <id>P00367</id>
    </interactant>
    <interactant intactId="EBI-1996072">
        <id>Q53GT1</id>
        <label>KLHL22</label>
    </interactant>
    <organismsDiffer>false</organismsDiffer>
    <experiments>9</experiments>
</comment>
<comment type="subcellular location">
    <subcellularLocation>
        <location evidence="15">Mitochondrion</location>
    </subcellularLocation>
    <subcellularLocation>
        <location evidence="15">Endoplasmic reticulum</location>
    </subcellularLocation>
    <text evidence="15">Mostly translocates into the mitochondria, only a small amount of the protein localizes to the endoplasmic reticulum.</text>
</comment>
<comment type="alternative products">
    <event type="alternative splicing"/>
    <isoform>
        <id>P00367-1</id>
        <name>1</name>
        <sequence type="displayed"/>
    </isoform>
    <isoform>
        <id>P00367-2</id>
        <name>2</name>
        <sequence type="described" ref="VSP_056244"/>
    </isoform>
    <isoform>
        <id>P00367-3</id>
        <name>3</name>
        <sequence type="described" ref="VSP_056523 VSP_056524"/>
    </isoform>
</comment>
<comment type="PTM">
    <text evidence="13 14">ADP-ribosylated by SIRT4, leading to inactivate glutamate dehydrogenase activity (PubMed:16959573). Stoichiometry shows that ADP-ribosylation occurs in one subunit per catalytically active homohexamer (PubMed:16023112).</text>
</comment>
<comment type="disease" evidence="6 8 10 18">
    <disease id="DI-01769">
        <name>Hyperinsulinemic hypoglycemia, familial, 6</name>
        <acronym>HHF6</acronym>
        <description>A form of hyperinsulinemic hypoglycemia, a clinically and genetically heterogeneous disorder characterized by inappropriate insulin secretion from the pancreatic beta-cells in the presence of low blood glucose levels. HHF6 is an autosomal dominant form characterized by hypoglycemia due to congenital hyperinsulinism combined with persistent hyperammonemia. Clinical features include loss of consciousness due to hypoglycemia, hypoglycemic seizures, and mental retardation.</description>
        <dbReference type="MIM" id="606762"/>
    </disease>
    <text>The disease is caused by variants affecting the gene represented in this entry.</text>
</comment>
<comment type="similarity">
    <text evidence="20">Belongs to the Glu/Leu/Phe/Val dehydrogenases family.</text>
</comment>
<comment type="online information" name="Wikipedia">
    <link uri="https://en.wikipedia.org/wiki/Glutamate_dehydrogenase_1"/>
    <text>Glutamate dehydrogenase 1 entry</text>
</comment>
<reference key="1">
    <citation type="journal article" date="1987" name="Biochem. Biophys. Res. Commun.">
        <title>Comparison of human brain and liver glutamate dehydrogenase cDNAs.</title>
        <authorList>
            <person name="Nakatani Y."/>
            <person name="Banner C."/>
            <person name="von Herrat M."/>
            <person name="Schneider M.E."/>
            <person name="Smith H.H."/>
            <person name="Freese E."/>
        </authorList>
    </citation>
    <scope>NUCLEOTIDE SEQUENCE [MRNA] (ISOFORM 1)</scope>
    <source>
        <tissue>Brain</tissue>
        <tissue>Liver</tissue>
    </source>
</reference>
<reference key="2">
    <citation type="journal article" date="1988" name="Biochem. Biophys. Res. Commun.">
        <title>Molecular cloning and nucleotide sequence of the cDNA for human liver glutamate dehydrogenase precursor.</title>
        <authorList>
            <person name="Amuro N."/>
            <person name="Yamaura M."/>
            <person name="Goto Y."/>
            <person name="Okazaki T."/>
        </authorList>
    </citation>
    <scope>NUCLEOTIDE SEQUENCE [MRNA] (ISOFORM 1)</scope>
    <source>
        <tissue>Liver</tissue>
    </source>
</reference>
<reference key="3">
    <citation type="journal article" date="1988" name="Nucleic Acids Res.">
        <title>Complete nucleotide sequence of human glutamate dehydrogenase cDNA.</title>
        <authorList>
            <person name="Nakatani Y."/>
            <person name="Schneider M.E."/>
            <person name="Banner C."/>
            <person name="Freese E."/>
        </authorList>
    </citation>
    <scope>NUCLEOTIDE SEQUENCE [MRNA] (ISOFORM 1)</scope>
</reference>
<reference key="4">
    <citation type="journal article" date="1988" name="Proc. Natl. Acad. Sci. U.S.A.">
        <title>Isolation and characterization of cDNA clones encoding human liver glutamate dehydrogenase: evidence for a small gene family.</title>
        <authorList>
            <person name="Mavrothalassitis G."/>
            <person name="Tzimagiorgis G."/>
            <person name="Mitsialis A."/>
            <person name="Zannis V."/>
            <person name="Plaitakis A."/>
            <person name="Papamatheakis J."/>
            <person name="Moschonas N."/>
        </authorList>
    </citation>
    <scope>NUCLEOTIDE SEQUENCE [MRNA] (ISOFORM 1)</scope>
    <source>
        <tissue>Liver</tissue>
    </source>
</reference>
<reference key="5">
    <citation type="journal article" date="1993" name="Genomics">
        <title>The human glutamate dehydrogenase gene family: gene organization and structural characterization.</title>
        <authorList>
            <person name="Michaelidis T.M."/>
            <person name="Tzimagiorgis G."/>
            <person name="Moschonas N.K."/>
            <person name="Papamatheakis J."/>
        </authorList>
    </citation>
    <scope>NUCLEOTIDE SEQUENCE [GENOMIC DNA]</scope>
    <source>
        <tissue>Placenta</tissue>
    </source>
</reference>
<reference key="6">
    <citation type="journal article" date="2004" name="Nat. Genet.">
        <title>Complete sequencing and characterization of 21,243 full-length human cDNAs.</title>
        <authorList>
            <person name="Ota T."/>
            <person name="Suzuki Y."/>
            <person name="Nishikawa T."/>
            <person name="Otsuki T."/>
            <person name="Sugiyama T."/>
            <person name="Irie R."/>
            <person name="Wakamatsu A."/>
            <person name="Hayashi K."/>
            <person name="Sato H."/>
            <person name="Nagai K."/>
            <person name="Kimura K."/>
            <person name="Makita H."/>
            <person name="Sekine M."/>
            <person name="Obayashi M."/>
            <person name="Nishi T."/>
            <person name="Shibahara T."/>
            <person name="Tanaka T."/>
            <person name="Ishii S."/>
            <person name="Yamamoto J."/>
            <person name="Saito K."/>
            <person name="Kawai Y."/>
            <person name="Isono Y."/>
            <person name="Nakamura Y."/>
            <person name="Nagahari K."/>
            <person name="Murakami K."/>
            <person name="Yasuda T."/>
            <person name="Iwayanagi T."/>
            <person name="Wagatsuma M."/>
            <person name="Shiratori A."/>
            <person name="Sudo H."/>
            <person name="Hosoiri T."/>
            <person name="Kaku Y."/>
            <person name="Kodaira H."/>
            <person name="Kondo H."/>
            <person name="Sugawara M."/>
            <person name="Takahashi M."/>
            <person name="Kanda K."/>
            <person name="Yokoi T."/>
            <person name="Furuya T."/>
            <person name="Kikkawa E."/>
            <person name="Omura Y."/>
            <person name="Abe K."/>
            <person name="Kamihara K."/>
            <person name="Katsuta N."/>
            <person name="Sato K."/>
            <person name="Tanikawa M."/>
            <person name="Yamazaki M."/>
            <person name="Ninomiya K."/>
            <person name="Ishibashi T."/>
            <person name="Yamashita H."/>
            <person name="Murakawa K."/>
            <person name="Fujimori K."/>
            <person name="Tanai H."/>
            <person name="Kimata M."/>
            <person name="Watanabe M."/>
            <person name="Hiraoka S."/>
            <person name="Chiba Y."/>
            <person name="Ishida S."/>
            <person name="Ono Y."/>
            <person name="Takiguchi S."/>
            <person name="Watanabe S."/>
            <person name="Yosida M."/>
            <person name="Hotuta T."/>
            <person name="Kusano J."/>
            <person name="Kanehori K."/>
            <person name="Takahashi-Fujii A."/>
            <person name="Hara H."/>
            <person name="Tanase T.-O."/>
            <person name="Nomura Y."/>
            <person name="Togiya S."/>
            <person name="Komai F."/>
            <person name="Hara R."/>
            <person name="Takeuchi K."/>
            <person name="Arita M."/>
            <person name="Imose N."/>
            <person name="Musashino K."/>
            <person name="Yuuki H."/>
            <person name="Oshima A."/>
            <person name="Sasaki N."/>
            <person name="Aotsuka S."/>
            <person name="Yoshikawa Y."/>
            <person name="Matsunawa H."/>
            <person name="Ichihara T."/>
            <person name="Shiohata N."/>
            <person name="Sano S."/>
            <person name="Moriya S."/>
            <person name="Momiyama H."/>
            <person name="Satoh N."/>
            <person name="Takami S."/>
            <person name="Terashima Y."/>
            <person name="Suzuki O."/>
            <person name="Nakagawa S."/>
            <person name="Senoh A."/>
            <person name="Mizoguchi H."/>
            <person name="Goto Y."/>
            <person name="Shimizu F."/>
            <person name="Wakebe H."/>
            <person name="Hishigaki H."/>
            <person name="Watanabe T."/>
            <person name="Sugiyama A."/>
            <person name="Takemoto M."/>
            <person name="Kawakami B."/>
            <person name="Yamazaki M."/>
            <person name="Watanabe K."/>
            <person name="Kumagai A."/>
            <person name="Itakura S."/>
            <person name="Fukuzumi Y."/>
            <person name="Fujimori Y."/>
            <person name="Komiyama M."/>
            <person name="Tashiro H."/>
            <person name="Tanigami A."/>
            <person name="Fujiwara T."/>
            <person name="Ono T."/>
            <person name="Yamada K."/>
            <person name="Fujii Y."/>
            <person name="Ozaki K."/>
            <person name="Hirao M."/>
            <person name="Ohmori Y."/>
            <person name="Kawabata A."/>
            <person name="Hikiji T."/>
            <person name="Kobatake N."/>
            <person name="Inagaki H."/>
            <person name="Ikema Y."/>
            <person name="Okamoto S."/>
            <person name="Okitani R."/>
            <person name="Kawakami T."/>
            <person name="Noguchi S."/>
            <person name="Itoh T."/>
            <person name="Shigeta K."/>
            <person name="Senba T."/>
            <person name="Matsumura K."/>
            <person name="Nakajima Y."/>
            <person name="Mizuno T."/>
            <person name="Morinaga M."/>
            <person name="Sasaki M."/>
            <person name="Togashi T."/>
            <person name="Oyama M."/>
            <person name="Hata H."/>
            <person name="Watanabe M."/>
            <person name="Komatsu T."/>
            <person name="Mizushima-Sugano J."/>
            <person name="Satoh T."/>
            <person name="Shirai Y."/>
            <person name="Takahashi Y."/>
            <person name="Nakagawa K."/>
            <person name="Okumura K."/>
            <person name="Nagase T."/>
            <person name="Nomura N."/>
            <person name="Kikuchi H."/>
            <person name="Masuho Y."/>
            <person name="Yamashita R."/>
            <person name="Nakai K."/>
            <person name="Yada T."/>
            <person name="Nakamura Y."/>
            <person name="Ohara O."/>
            <person name="Isogai T."/>
            <person name="Sugano S."/>
        </authorList>
    </citation>
    <scope>NUCLEOTIDE SEQUENCE [LARGE SCALE MRNA] (ISOFORMS 2 AND 3)</scope>
    <source>
        <tissue>Brain</tissue>
        <tissue>Brain cortex</tissue>
    </source>
</reference>
<reference key="7">
    <citation type="journal article" date="2004" name="Nature">
        <title>The DNA sequence and comparative analysis of human chromosome 10.</title>
        <authorList>
            <person name="Deloukas P."/>
            <person name="Earthrowl M.E."/>
            <person name="Grafham D.V."/>
            <person name="Rubenfield M."/>
            <person name="French L."/>
            <person name="Steward C.A."/>
            <person name="Sims S.K."/>
            <person name="Jones M.C."/>
            <person name="Searle S."/>
            <person name="Scott C."/>
            <person name="Howe K."/>
            <person name="Hunt S.E."/>
            <person name="Andrews T.D."/>
            <person name="Gilbert J.G.R."/>
            <person name="Swarbreck D."/>
            <person name="Ashurst J.L."/>
            <person name="Taylor A."/>
            <person name="Battles J."/>
            <person name="Bird C.P."/>
            <person name="Ainscough R."/>
            <person name="Almeida J.P."/>
            <person name="Ashwell R.I.S."/>
            <person name="Ambrose K.D."/>
            <person name="Babbage A.K."/>
            <person name="Bagguley C.L."/>
            <person name="Bailey J."/>
            <person name="Banerjee R."/>
            <person name="Bates K."/>
            <person name="Beasley H."/>
            <person name="Bray-Allen S."/>
            <person name="Brown A.J."/>
            <person name="Brown J.Y."/>
            <person name="Burford D.C."/>
            <person name="Burrill W."/>
            <person name="Burton J."/>
            <person name="Cahill P."/>
            <person name="Camire D."/>
            <person name="Carter N.P."/>
            <person name="Chapman J.C."/>
            <person name="Clark S.Y."/>
            <person name="Clarke G."/>
            <person name="Clee C.M."/>
            <person name="Clegg S."/>
            <person name="Corby N."/>
            <person name="Coulson A."/>
            <person name="Dhami P."/>
            <person name="Dutta I."/>
            <person name="Dunn M."/>
            <person name="Faulkner L."/>
            <person name="Frankish A."/>
            <person name="Frankland J.A."/>
            <person name="Garner P."/>
            <person name="Garnett J."/>
            <person name="Gribble S."/>
            <person name="Griffiths C."/>
            <person name="Grocock R."/>
            <person name="Gustafson E."/>
            <person name="Hammond S."/>
            <person name="Harley J.L."/>
            <person name="Hart E."/>
            <person name="Heath P.D."/>
            <person name="Ho T.P."/>
            <person name="Hopkins B."/>
            <person name="Horne J."/>
            <person name="Howden P.J."/>
            <person name="Huckle E."/>
            <person name="Hynds C."/>
            <person name="Johnson C."/>
            <person name="Johnson D."/>
            <person name="Kana A."/>
            <person name="Kay M."/>
            <person name="Kimberley A.M."/>
            <person name="Kershaw J.K."/>
            <person name="Kokkinaki M."/>
            <person name="Laird G.K."/>
            <person name="Lawlor S."/>
            <person name="Lee H.M."/>
            <person name="Leongamornlert D.A."/>
            <person name="Laird G."/>
            <person name="Lloyd C."/>
            <person name="Lloyd D.M."/>
            <person name="Loveland J."/>
            <person name="Lovell J."/>
            <person name="McLaren S."/>
            <person name="McLay K.E."/>
            <person name="McMurray A."/>
            <person name="Mashreghi-Mohammadi M."/>
            <person name="Matthews L."/>
            <person name="Milne S."/>
            <person name="Nickerson T."/>
            <person name="Nguyen M."/>
            <person name="Overton-Larty E."/>
            <person name="Palmer S.A."/>
            <person name="Pearce A.V."/>
            <person name="Peck A.I."/>
            <person name="Pelan S."/>
            <person name="Phillimore B."/>
            <person name="Porter K."/>
            <person name="Rice C.M."/>
            <person name="Rogosin A."/>
            <person name="Ross M.T."/>
            <person name="Sarafidou T."/>
            <person name="Sehra H.K."/>
            <person name="Shownkeen R."/>
            <person name="Skuce C.D."/>
            <person name="Smith M."/>
            <person name="Standring L."/>
            <person name="Sycamore N."/>
            <person name="Tester J."/>
            <person name="Thorpe A."/>
            <person name="Torcasso W."/>
            <person name="Tracey A."/>
            <person name="Tromans A."/>
            <person name="Tsolas J."/>
            <person name="Wall M."/>
            <person name="Walsh J."/>
            <person name="Wang H."/>
            <person name="Weinstock K."/>
            <person name="West A.P."/>
            <person name="Willey D.L."/>
            <person name="Whitehead S.L."/>
            <person name="Wilming L."/>
            <person name="Wray P.W."/>
            <person name="Young L."/>
            <person name="Chen Y."/>
            <person name="Lovering R.C."/>
            <person name="Moschonas N.K."/>
            <person name="Siebert R."/>
            <person name="Fechtel K."/>
            <person name="Bentley D."/>
            <person name="Durbin R.M."/>
            <person name="Hubbard T."/>
            <person name="Doucette-Stamm L."/>
            <person name="Beck S."/>
            <person name="Smith D.R."/>
            <person name="Rogers J."/>
        </authorList>
    </citation>
    <scope>NUCLEOTIDE SEQUENCE [LARGE SCALE GENOMIC DNA]</scope>
</reference>
<reference key="8">
    <citation type="submission" date="2005-07" db="EMBL/GenBank/DDBJ databases">
        <authorList>
            <person name="Mural R.J."/>
            <person name="Istrail S."/>
            <person name="Sutton G."/>
            <person name="Florea L."/>
            <person name="Halpern A.L."/>
            <person name="Mobarry C.M."/>
            <person name="Lippert R."/>
            <person name="Walenz B."/>
            <person name="Shatkay H."/>
            <person name="Dew I."/>
            <person name="Miller J.R."/>
            <person name="Flanigan M.J."/>
            <person name="Edwards N.J."/>
            <person name="Bolanos R."/>
            <person name="Fasulo D."/>
            <person name="Halldorsson B.V."/>
            <person name="Hannenhalli S."/>
            <person name="Turner R."/>
            <person name="Yooseph S."/>
            <person name="Lu F."/>
            <person name="Nusskern D.R."/>
            <person name="Shue B.C."/>
            <person name="Zheng X.H."/>
            <person name="Zhong F."/>
            <person name="Delcher A.L."/>
            <person name="Huson D.H."/>
            <person name="Kravitz S.A."/>
            <person name="Mouchard L."/>
            <person name="Reinert K."/>
            <person name="Remington K.A."/>
            <person name="Clark A.G."/>
            <person name="Waterman M.S."/>
            <person name="Eichler E.E."/>
            <person name="Adams M.D."/>
            <person name="Hunkapiller M.W."/>
            <person name="Myers E.W."/>
            <person name="Venter J.C."/>
        </authorList>
    </citation>
    <scope>NUCLEOTIDE SEQUENCE [LARGE SCALE GENOMIC DNA]</scope>
</reference>
<reference key="9">
    <citation type="journal article" date="2004" name="Genome Res.">
        <title>The status, quality, and expansion of the NIH full-length cDNA project: the Mammalian Gene Collection (MGC).</title>
        <authorList>
            <consortium name="The MGC Project Team"/>
        </authorList>
    </citation>
    <scope>NUCLEOTIDE SEQUENCE [LARGE SCALE MRNA] (ISOFORM 1)</scope>
    <source>
        <tissue>Duodenum</tissue>
        <tissue>Eye</tissue>
    </source>
</reference>
<reference key="10">
    <citation type="journal article" date="1979" name="J. Biol. Chem.">
        <title>Partial amino acid sequence of the glutamate dehydrogenase of human liver and a revision of the sequence of the bovine enzyme.</title>
        <authorList>
            <person name="Julliard J.H."/>
            <person name="Smith E.L."/>
        </authorList>
    </citation>
    <scope>PROTEIN SEQUENCE OF 54-558</scope>
    <source>
        <tissue>Liver</tissue>
    </source>
</reference>
<reference key="11">
    <citation type="journal article" date="1992" name="Electrophoresis">
        <title>Human liver protein map: a reference database established by microsequencing and gel comparison.</title>
        <authorList>
            <person name="Hochstrasser D.F."/>
            <person name="Frutiger S."/>
            <person name="Paquet N."/>
            <person name="Bairoch A."/>
            <person name="Ravier F."/>
            <person name="Pasquali C."/>
            <person name="Sanchez J.-C."/>
            <person name="Tissot J.-D."/>
            <person name="Bjellqvist B."/>
            <person name="Vargas R."/>
            <person name="Appel R.D."/>
            <person name="Hughes G.J."/>
        </authorList>
    </citation>
    <scope>PROTEIN SEQUENCE OF 54-69</scope>
    <source>
        <tissue>Liver</tissue>
    </source>
</reference>
<reference key="12">
    <citation type="journal article" date="1987" name="J. Neurochem.">
        <title>Isolation of a human brain cDNA for glutamate dehydrogenase.</title>
        <authorList>
            <person name="Banner C."/>
            <person name="Silverman S."/>
            <person name="Thomas J.W."/>
            <person name="Lampel K.A."/>
            <person name="Vitkovic L."/>
            <person name="Huie D."/>
            <person name="Wenthold R.J."/>
        </authorList>
    </citation>
    <scope>NUCLEOTIDE SEQUENCE [MRNA] OF 301-558 (ISOFORM 1)</scope>
    <source>
        <tissue>Brain</tissue>
    </source>
</reference>
<reference key="13">
    <citation type="submission" date="2007-03" db="UniProtKB">
        <authorList>
            <person name="Lubec G."/>
            <person name="Vishwanath V."/>
        </authorList>
    </citation>
    <scope>PROTEIN SEQUENCE OF 481-496</scope>
    <scope>IDENTIFICATION BY MASS SPECTROMETRY</scope>
    <source>
        <tissue>Brain</tissue>
        <tissue>Cajal-Retzius cell</tissue>
    </source>
</reference>
<reference key="14">
    <citation type="journal article" date="1993" name="Hum. Genet.">
        <title>Structure and expression analysis of a member of the human glutamate dehydrogenase (GLUD) gene family mapped to chromosome 10p11.2.</title>
        <authorList>
            <person name="Tzimagiorgis G."/>
            <person name="Leversha M.A."/>
            <person name="Chroniary K."/>
            <person name="Goulielmos G."/>
            <person name="Sargent C.A."/>
            <person name="Ferguson-Smith M."/>
            <person name="Moschonas N.K."/>
        </authorList>
    </citation>
    <scope>NUCLEOTIDE SEQUENCE [GENOMIC DNA] OF 540-558</scope>
</reference>
<reference key="15">
    <citation type="journal article" date="2000" name="J. Neurochem.">
        <title>Nerve tissue-specific (GLUD2) and housekeeping (GLUD1) human glutamate dehydrogenases are regulated by distinct allosteric mechanisms: implications for biologic function.</title>
        <authorList>
            <person name="Plaitakis A."/>
            <person name="Metaxari M."/>
            <person name="Shashidharan P."/>
        </authorList>
    </citation>
    <scope>CATALYTIC ACTIVITY</scope>
    <scope>FUNCTION</scope>
    <scope>ACTIVITY REGULATION</scope>
</reference>
<reference key="16">
    <citation type="journal article" date="2005" name="FEBS Lett.">
        <title>Identification of ADP-ribosylation site in human glutamate dehydrogenase isozymes.</title>
        <authorList>
            <person name="Choi M.M."/>
            <person name="Huh J.W."/>
            <person name="Yang S.J."/>
            <person name="Cho E.H."/>
            <person name="Choi S.Y."/>
            <person name="Cho S.W."/>
        </authorList>
    </citation>
    <scope>ADP-RIBOSYLATION AT CYS-172</scope>
    <scope>CATALYTIC ACTIVITY</scope>
    <scope>FUNCTION</scope>
</reference>
<reference key="17">
    <citation type="journal article" date="2009" name="Biochem. Cell Biol.">
        <title>Human GLUD1 and GLUD2 glutamate dehydrogenase localize to mitochondria and endoplasmic reticulum.</title>
        <authorList>
            <person name="Mastorodemos V."/>
            <person name="Kotzamani D."/>
            <person name="Zaganas I."/>
            <person name="Arianoglou G."/>
            <person name="Latsoudis H."/>
            <person name="Plaitakis A."/>
        </authorList>
    </citation>
    <scope>SUBCELLULAR LOCATION</scope>
</reference>
<reference key="18">
    <citation type="journal article" date="2009" name="Science">
        <title>Lysine acetylation targets protein complexes and co-regulates major cellular functions.</title>
        <authorList>
            <person name="Choudhary C."/>
            <person name="Kumar C."/>
            <person name="Gnad F."/>
            <person name="Nielsen M.L."/>
            <person name="Rehman M."/>
            <person name="Walther T.C."/>
            <person name="Olsen J.V."/>
            <person name="Mann M."/>
        </authorList>
    </citation>
    <scope>ACETYLATION [LARGE SCALE ANALYSIS] AT LYS-84; LYS-480 AND LYS-503</scope>
    <scope>IDENTIFICATION BY MASS SPECTROMETRY [LARGE SCALE ANALYSIS]</scope>
</reference>
<reference key="19">
    <citation type="journal article" date="2011" name="BMC Syst. Biol.">
        <title>Initial characterization of the human central proteome.</title>
        <authorList>
            <person name="Burkard T.R."/>
            <person name="Planyavsky M."/>
            <person name="Kaupe I."/>
            <person name="Breitwieser F.P."/>
            <person name="Buerckstuemmer T."/>
            <person name="Bennett K.L."/>
            <person name="Superti-Furga G."/>
            <person name="Colinge J."/>
        </authorList>
    </citation>
    <scope>IDENTIFICATION BY MASS SPECTROMETRY [LARGE SCALE ANALYSIS]</scope>
</reference>
<reference key="20">
    <citation type="journal article" date="2014" name="J. Proteomics">
        <title>An enzyme assisted RP-RPLC approach for in-depth analysis of human liver phosphoproteome.</title>
        <authorList>
            <person name="Bian Y."/>
            <person name="Song C."/>
            <person name="Cheng K."/>
            <person name="Dong M."/>
            <person name="Wang F."/>
            <person name="Huang J."/>
            <person name="Sun D."/>
            <person name="Wang L."/>
            <person name="Ye M."/>
            <person name="Zou H."/>
        </authorList>
    </citation>
    <scope>PHOSPHORYLATION [LARGE SCALE ANALYSIS] AT SER-227; SER-384 AND TYR-512</scope>
    <scope>IDENTIFICATION BY MASS SPECTROMETRY [LARGE SCALE ANALYSIS]</scope>
    <source>
        <tissue>Liver</tissue>
    </source>
</reference>
<reference key="21">
    <citation type="journal article" date="2015" name="Proteomics">
        <title>N-terminome analysis of the human mitochondrial proteome.</title>
        <authorList>
            <person name="Vaca Jacome A.S."/>
            <person name="Rabilloud T."/>
            <person name="Schaeffer-Reiss C."/>
            <person name="Rompais M."/>
            <person name="Ayoub D."/>
            <person name="Lane L."/>
            <person name="Bairoch A."/>
            <person name="Van Dorsselaer A."/>
            <person name="Carapito C."/>
        </authorList>
    </citation>
    <scope>CLEAVAGE OF TRANSIT PEPTIDE [LARGE SCALE ANALYSIS] AFTER TYR-53</scope>
    <scope>IDENTIFICATION BY MASS SPECTROMETRY [LARGE SCALE ANALYSIS]</scope>
</reference>
<reference key="22">
    <citation type="journal article" date="2001" name="J. Mol. Biol.">
        <title>Structures of bovine glutamate dehydrogenase complexes elucidate the mechanism of purine regulation.</title>
        <authorList>
            <person name="Smith T.J."/>
            <person name="Peterson P.E."/>
            <person name="Schmidt T."/>
            <person name="Fang J."/>
            <person name="Stanley C.A."/>
        </authorList>
    </citation>
    <scope>CHARACTERIZATION OF VARIANT TYR-507</scope>
    <scope>ACTIVITY REGULATION</scope>
    <scope>FUNCTION</scope>
    <scope>CATALYTIC ACTIVITY</scope>
</reference>
<reference key="23">
    <citation type="journal article" date="2002" name="Biochem. J.">
        <title>Expression, purification and characterization of human glutamate dehydrogenase (GDH) allosteric regulatory mutations.</title>
        <authorList>
            <person name="Fang J."/>
            <person name="Hsu B.Y.L."/>
            <person name="MacMullen C.M."/>
            <person name="Poncz M."/>
            <person name="Smith T.J."/>
            <person name="Stanley C.A."/>
        </authorList>
    </citation>
    <scope>MUTAGENESIS OF SER-501 AND ARG-516</scope>
    <scope>CHARACTERIZATION OF VARIANT TYR-507</scope>
    <scope>ALLOSTERIC REGULATION</scope>
</reference>
<reference key="24">
    <citation type="journal article" date="2006" name="Cell">
        <title>SIRT4 inhibits glutamate dehydrogenase and opposes the effects of calorie restriction in pancreatic beta cells.</title>
        <authorList>
            <person name="Haigis M.C."/>
            <person name="Mostoslavsky R."/>
            <person name="Haigis K.M."/>
            <person name="Fahie K."/>
            <person name="Christodoulou D.C."/>
            <person name="Murphy A.J."/>
            <person name="Valenzuela D.M."/>
            <person name="Yancopoulos G.D."/>
            <person name="Karow M."/>
            <person name="Blander G."/>
            <person name="Wolberger C."/>
            <person name="Prolla T.A."/>
            <person name="Weindruch R."/>
            <person name="Alt F.W."/>
            <person name="Guarente L."/>
        </authorList>
    </citation>
    <scope>ADP-RIBOSYLATION</scope>
    <scope>CATALYTIC ACTIVITY</scope>
    <scope>FUNCTION</scope>
    <scope>ACTIVITY REGULATION</scope>
</reference>
<reference key="25">
    <citation type="journal article" date="2018" name="Cell Res.">
        <title>Landscape of the regulatory elements for lysine 2-hydroxyisobutyrylation pathway.</title>
        <authorList>
            <person name="Huang H."/>
            <person name="Luo Z."/>
            <person name="Qi S."/>
            <person name="Huang J."/>
            <person name="Xu P."/>
            <person name="Wang X."/>
            <person name="Gao L."/>
            <person name="Li F."/>
            <person name="Wang J."/>
            <person name="Zhao W."/>
            <person name="Gu W."/>
            <person name="Chen Z."/>
            <person name="Dai L."/>
            <person name="Dai J."/>
            <person name="Zhao Y."/>
        </authorList>
    </citation>
    <scope>HYDROXYBUTYRYLATION AT LYS-147</scope>
</reference>
<reference key="26">
    <citation type="journal article" date="2002" name="J. Mol. Biol.">
        <title>The structure of apo human glutamate dehydrogenase details subunit communication and allostery.</title>
        <authorList>
            <person name="Smith T.J."/>
            <person name="Schmidt T."/>
            <person name="Fang J."/>
            <person name="Wu J."/>
            <person name="Siuzdak G."/>
            <person name="Stanley C.A."/>
        </authorList>
    </citation>
    <scope>X-RAY CRYSTALLOGRAPHY (2.7 ANGSTROMS) OF 54-558</scope>
</reference>
<reference key="27">
    <citation type="journal article" date="2003" name="Biochemistry">
        <title>Structural studies on ADP activation of mammalian glutamate dehydrogenase and the evolution of regulation.</title>
        <authorList>
            <person name="Banerjee S."/>
            <person name="Schmidt T."/>
            <person name="Fang J."/>
            <person name="Stanley C.A."/>
            <person name="Smith T.J."/>
        </authorList>
    </citation>
    <scope>X-RAY CRYSTALLOGRAPHY (3.3 ANGSTROMS) OF 63-558 OF MUTANT ALA-516</scope>
    <scope>ALLOSTERIC REGULATION</scope>
</reference>
<reference key="28">
    <citation type="journal article" date="1998" name="N. Engl. J. Med.">
        <title>Hyperinsulinism and hyperammonemia in infants with regulatory mutations of the glutamate dehydrogenase gene.</title>
        <authorList>
            <person name="Stanley C.A."/>
            <person name="Lieu Y.K."/>
            <person name="Hsu B.Y.L."/>
            <person name="Burlina A.B."/>
            <person name="Greenberg C.R."/>
            <person name="Hopwood N.J."/>
            <person name="Perlman K."/>
            <person name="Rich B.H."/>
            <person name="Zammarchi E."/>
            <person name="Poncz M."/>
        </authorList>
    </citation>
    <scope>VARIANTS HHF6 LEU-498; SER-499; ASP-499; PRO-501 AND TYR-507</scope>
    <scope>CHARACTERIZATION OF VARIANT TYR-507</scope>
    <scope>FUNCTION</scope>
    <scope>ACTIVITY REGULATION</scope>
</reference>
<reference key="29">
    <citation type="journal article" date="2000" name="J. Pediatr.">
        <title>Novel missense mutations in the glutamate dehydrogenase gene in the congenital hyperinsulinism-hyperammonemia syndrome.</title>
        <authorList>
            <person name="Miki Y."/>
            <person name="Taki T."/>
            <person name="Ohura T."/>
            <person name="Kato H."/>
            <person name="Yanagisawa M."/>
            <person name="Hayashi Y."/>
        </authorList>
    </citation>
    <scope>VARIANTS HHF6 LYS-318 AND ALA-349</scope>
</reference>
<reference key="30">
    <citation type="journal article" date="2001" name="Hum. Genet.">
        <title>Novel missense mutations outside the allosteric domain of glutamate dehydrogenase are prevalent in European patients with the congenital hyperinsulinism-hyperammonemia syndrome.</title>
        <authorList>
            <person name="Santer R."/>
            <person name="Kinner M."/>
            <person name="Passarge M."/>
            <person name="Superti-Furga A."/>
            <person name="Mayatepek E."/>
            <person name="Meissner T."/>
            <person name="Schneppenheim R."/>
            <person name="Schaub J."/>
        </authorList>
    </citation>
    <scope>VARIANTS HHF6 CYS-274 AND HIS-322</scope>
</reference>
<reference key="31">
    <citation type="journal article" date="2001" name="J. Clin. Endocrinol. Metab.">
        <title>Hyperinsulinism/hyperammonemia syndrome in children with regulatory mutations in the inhibitory guanosine triphosphate-binding domain of glutamate dehydrogenase.</title>
        <authorList>
            <person name="MacMullen C."/>
            <person name="Fang J."/>
            <person name="Hsu B.Y.L."/>
            <person name="Kelly A."/>
            <person name="de Lonlay-Debeney P."/>
            <person name="Saudubray J.-M."/>
            <person name="Ganguly A."/>
            <person name="Smith T.J."/>
            <person name="Stanley C.A."/>
            <person name="Brown R."/>
            <person name="Buist N."/>
            <person name="Dasouki M."/>
            <person name="Fefferman R."/>
            <person name="Grange D."/>
            <person name="Karaviti L."/>
            <person name="Luedke C."/>
            <person name="Marriage B."/>
            <person name="McLaughlin J."/>
            <person name="Perlman K."/>
            <person name="Seashore M."/>
            <person name="van Vliet G."/>
        </authorList>
    </citation>
    <scope>VARIANTS HHF6 CYS-270; CYS-274; THR-318; CYS-319; CYS-322 AND HIS-322</scope>
    <scope>CHARACTERIZATION OF VARIANTS HHF6 CYS-270; CYS-274; THR-318; CYS-322 AND HIS-322</scope>
    <scope>FUNCTION</scope>
    <scope>ACTIVITY REGULATION</scope>
</reference>
<gene>
    <name type="primary">GLUD1</name>
    <name type="synonym">GLUD</name>
</gene>